<evidence type="ECO:0000255" key="1">
    <source>
        <dbReference type="HAMAP-Rule" id="MF_00248"/>
    </source>
</evidence>
<sequence length="178" mass="19172">MEQFHGTTIVSVRRGDKVALGGDGQVTLGNIVMKGGARKVRRIYNNQVLVGFAGGTADAFSLLDRFEAKLEKHQGNLTRAAVELAKDWRTDRMLRRLEAMLITADANTTLVITGNGDVLDPEGGICAIGSGGAYAQAAARALAENTELSPREIVEKSLEIAGDMCIYTNHNRVIETIE</sequence>
<name>HSLV_BURM1</name>
<accession>A9AC32</accession>
<reference key="1">
    <citation type="submission" date="2007-10" db="EMBL/GenBank/DDBJ databases">
        <title>Complete sequence of chromosome 1 of Burkholderia multivorans ATCC 17616.</title>
        <authorList>
            <person name="Copeland A."/>
            <person name="Lucas S."/>
            <person name="Lapidus A."/>
            <person name="Barry K."/>
            <person name="Glavina del Rio T."/>
            <person name="Dalin E."/>
            <person name="Tice H."/>
            <person name="Pitluck S."/>
            <person name="Chain P."/>
            <person name="Malfatti S."/>
            <person name="Shin M."/>
            <person name="Vergez L."/>
            <person name="Schmutz J."/>
            <person name="Larimer F."/>
            <person name="Land M."/>
            <person name="Hauser L."/>
            <person name="Kyrpides N."/>
            <person name="Kim E."/>
            <person name="Tiedje J."/>
            <person name="Richardson P."/>
        </authorList>
    </citation>
    <scope>NUCLEOTIDE SEQUENCE [LARGE SCALE GENOMIC DNA]</scope>
    <source>
        <strain>ATCC 17616 / 249</strain>
    </source>
</reference>
<reference key="2">
    <citation type="submission" date="2007-04" db="EMBL/GenBank/DDBJ databases">
        <title>Complete genome sequence of Burkholderia multivorans ATCC 17616.</title>
        <authorList>
            <person name="Ohtsubo Y."/>
            <person name="Yamashita A."/>
            <person name="Kurokawa K."/>
            <person name="Takami H."/>
            <person name="Yuhara S."/>
            <person name="Nishiyama E."/>
            <person name="Endo R."/>
            <person name="Miyazaki R."/>
            <person name="Ono A."/>
            <person name="Yano K."/>
            <person name="Ito M."/>
            <person name="Sota M."/>
            <person name="Yuji N."/>
            <person name="Hattori M."/>
            <person name="Tsuda M."/>
        </authorList>
    </citation>
    <scope>NUCLEOTIDE SEQUENCE [LARGE SCALE GENOMIC DNA]</scope>
    <source>
        <strain>ATCC 17616 / 249</strain>
    </source>
</reference>
<feature type="chain" id="PRO_1000100879" description="ATP-dependent protease subunit HslV">
    <location>
        <begin position="1"/>
        <end position="178"/>
    </location>
</feature>
<feature type="active site" evidence="1">
    <location>
        <position position="7"/>
    </location>
</feature>
<feature type="binding site" evidence="1">
    <location>
        <position position="162"/>
    </location>
    <ligand>
        <name>Na(+)</name>
        <dbReference type="ChEBI" id="CHEBI:29101"/>
    </ligand>
</feature>
<feature type="binding site" evidence="1">
    <location>
        <position position="165"/>
    </location>
    <ligand>
        <name>Na(+)</name>
        <dbReference type="ChEBI" id="CHEBI:29101"/>
    </ligand>
</feature>
<feature type="binding site" evidence="1">
    <location>
        <position position="168"/>
    </location>
    <ligand>
        <name>Na(+)</name>
        <dbReference type="ChEBI" id="CHEBI:29101"/>
    </ligand>
</feature>
<keyword id="KW-0021">Allosteric enzyme</keyword>
<keyword id="KW-0963">Cytoplasm</keyword>
<keyword id="KW-0378">Hydrolase</keyword>
<keyword id="KW-0479">Metal-binding</keyword>
<keyword id="KW-0645">Protease</keyword>
<keyword id="KW-1185">Reference proteome</keyword>
<keyword id="KW-0915">Sodium</keyword>
<keyword id="KW-0888">Threonine protease</keyword>
<proteinExistence type="inferred from homology"/>
<comment type="function">
    <text evidence="1">Protease subunit of a proteasome-like degradation complex believed to be a general protein degrading machinery.</text>
</comment>
<comment type="catalytic activity">
    <reaction evidence="1">
        <text>ATP-dependent cleavage of peptide bonds with broad specificity.</text>
        <dbReference type="EC" id="3.4.25.2"/>
    </reaction>
</comment>
<comment type="activity regulation">
    <text evidence="1">Allosterically activated by HslU binding.</text>
</comment>
<comment type="subunit">
    <text evidence="1">A double ring-shaped homohexamer of HslV is capped on each side by a ring-shaped HslU homohexamer. The assembly of the HslU/HslV complex is dependent on binding of ATP.</text>
</comment>
<comment type="subcellular location">
    <subcellularLocation>
        <location evidence="1">Cytoplasm</location>
    </subcellularLocation>
</comment>
<comment type="similarity">
    <text evidence="1">Belongs to the peptidase T1B family. HslV subfamily.</text>
</comment>
<organism>
    <name type="scientific">Burkholderia multivorans (strain ATCC 17616 / 249)</name>
    <dbReference type="NCBI Taxonomy" id="395019"/>
    <lineage>
        <taxon>Bacteria</taxon>
        <taxon>Pseudomonadati</taxon>
        <taxon>Pseudomonadota</taxon>
        <taxon>Betaproteobacteria</taxon>
        <taxon>Burkholderiales</taxon>
        <taxon>Burkholderiaceae</taxon>
        <taxon>Burkholderia</taxon>
        <taxon>Burkholderia cepacia complex</taxon>
    </lineage>
</organism>
<dbReference type="EC" id="3.4.25.2" evidence="1"/>
<dbReference type="EMBL" id="CP000868">
    <property type="protein sequence ID" value="ABX16770.1"/>
    <property type="molecule type" value="Genomic_DNA"/>
</dbReference>
<dbReference type="EMBL" id="AP009385">
    <property type="protein sequence ID" value="BAG42123.1"/>
    <property type="molecule type" value="Genomic_DNA"/>
</dbReference>
<dbReference type="RefSeq" id="WP_006402996.1">
    <property type="nucleotide sequence ID" value="NC_010804.1"/>
</dbReference>
<dbReference type="SMR" id="A9AC32"/>
<dbReference type="STRING" id="395019.BMULJ_00145"/>
<dbReference type="MEROPS" id="T01.006"/>
<dbReference type="GeneID" id="89571626"/>
<dbReference type="KEGG" id="bmj:BMULJ_00145"/>
<dbReference type="KEGG" id="bmu:Bmul_3086"/>
<dbReference type="eggNOG" id="COG5405">
    <property type="taxonomic scope" value="Bacteria"/>
</dbReference>
<dbReference type="HOGENOM" id="CLU_093872_1_0_4"/>
<dbReference type="Proteomes" id="UP000008815">
    <property type="component" value="Chromosome 1"/>
</dbReference>
<dbReference type="GO" id="GO:0009376">
    <property type="term" value="C:HslUV protease complex"/>
    <property type="evidence" value="ECO:0007669"/>
    <property type="project" value="UniProtKB-UniRule"/>
</dbReference>
<dbReference type="GO" id="GO:0005839">
    <property type="term" value="C:proteasome core complex"/>
    <property type="evidence" value="ECO:0007669"/>
    <property type="project" value="InterPro"/>
</dbReference>
<dbReference type="GO" id="GO:0046872">
    <property type="term" value="F:metal ion binding"/>
    <property type="evidence" value="ECO:0007669"/>
    <property type="project" value="UniProtKB-KW"/>
</dbReference>
<dbReference type="GO" id="GO:0004298">
    <property type="term" value="F:threonine-type endopeptidase activity"/>
    <property type="evidence" value="ECO:0007669"/>
    <property type="project" value="UniProtKB-KW"/>
</dbReference>
<dbReference type="GO" id="GO:0051603">
    <property type="term" value="P:proteolysis involved in protein catabolic process"/>
    <property type="evidence" value="ECO:0007669"/>
    <property type="project" value="InterPro"/>
</dbReference>
<dbReference type="CDD" id="cd01913">
    <property type="entry name" value="protease_HslV"/>
    <property type="match status" value="1"/>
</dbReference>
<dbReference type="FunFam" id="3.60.20.10:FF:000002">
    <property type="entry name" value="ATP-dependent protease subunit HslV"/>
    <property type="match status" value="1"/>
</dbReference>
<dbReference type="Gene3D" id="3.60.20.10">
    <property type="entry name" value="Glutamine Phosphoribosylpyrophosphate, subunit 1, domain 1"/>
    <property type="match status" value="1"/>
</dbReference>
<dbReference type="HAMAP" id="MF_00248">
    <property type="entry name" value="HslV"/>
    <property type="match status" value="1"/>
</dbReference>
<dbReference type="InterPro" id="IPR022281">
    <property type="entry name" value="ATP-dep_Prtase_HsIV_su"/>
</dbReference>
<dbReference type="InterPro" id="IPR029055">
    <property type="entry name" value="Ntn_hydrolases_N"/>
</dbReference>
<dbReference type="InterPro" id="IPR001353">
    <property type="entry name" value="Proteasome_sua/b"/>
</dbReference>
<dbReference type="InterPro" id="IPR023333">
    <property type="entry name" value="Proteasome_suB-type"/>
</dbReference>
<dbReference type="NCBIfam" id="TIGR03692">
    <property type="entry name" value="ATP_dep_HslV"/>
    <property type="match status" value="1"/>
</dbReference>
<dbReference type="NCBIfam" id="NF003964">
    <property type="entry name" value="PRK05456.1"/>
    <property type="match status" value="1"/>
</dbReference>
<dbReference type="PANTHER" id="PTHR32194:SF0">
    <property type="entry name" value="ATP-DEPENDENT PROTEASE SUBUNIT HSLV"/>
    <property type="match status" value="1"/>
</dbReference>
<dbReference type="PANTHER" id="PTHR32194">
    <property type="entry name" value="METALLOPROTEASE TLDD"/>
    <property type="match status" value="1"/>
</dbReference>
<dbReference type="Pfam" id="PF00227">
    <property type="entry name" value="Proteasome"/>
    <property type="match status" value="1"/>
</dbReference>
<dbReference type="PIRSF" id="PIRSF039093">
    <property type="entry name" value="HslV"/>
    <property type="match status" value="1"/>
</dbReference>
<dbReference type="SUPFAM" id="SSF56235">
    <property type="entry name" value="N-terminal nucleophile aminohydrolases (Ntn hydrolases)"/>
    <property type="match status" value="1"/>
</dbReference>
<dbReference type="PROSITE" id="PS51476">
    <property type="entry name" value="PROTEASOME_BETA_2"/>
    <property type="match status" value="1"/>
</dbReference>
<protein>
    <recommendedName>
        <fullName evidence="1">ATP-dependent protease subunit HslV</fullName>
        <ecNumber evidence="1">3.4.25.2</ecNumber>
    </recommendedName>
</protein>
<gene>
    <name evidence="1" type="primary">hslV</name>
    <name type="ordered locus">Bmul_3086</name>
    <name type="ordered locus">BMULJ_00145</name>
</gene>